<organism>
    <name type="scientific">Homo sapiens</name>
    <name type="common">Human</name>
    <dbReference type="NCBI Taxonomy" id="9606"/>
    <lineage>
        <taxon>Eukaryota</taxon>
        <taxon>Metazoa</taxon>
        <taxon>Chordata</taxon>
        <taxon>Craniata</taxon>
        <taxon>Vertebrata</taxon>
        <taxon>Euteleostomi</taxon>
        <taxon>Mammalia</taxon>
        <taxon>Eutheria</taxon>
        <taxon>Euarchontoglires</taxon>
        <taxon>Primates</taxon>
        <taxon>Haplorrhini</taxon>
        <taxon>Catarrhini</taxon>
        <taxon>Hominidae</taxon>
        <taxon>Homo</taxon>
    </lineage>
</organism>
<dbReference type="EMBL" id="AF074968">
    <property type="protein sequence ID" value="AAG12172.1"/>
    <property type="molecule type" value="mRNA"/>
</dbReference>
<dbReference type="EMBL" id="AY007790">
    <property type="protein sequence ID" value="AAG23285.1"/>
    <property type="molecule type" value="mRNA"/>
</dbReference>
<dbReference type="EMBL" id="AK000096">
    <property type="protein sequence ID" value="BAA90942.1"/>
    <property type="molecule type" value="mRNA"/>
</dbReference>
<dbReference type="EMBL" id="AK291905">
    <property type="protein sequence ID" value="BAF84594.1"/>
    <property type="molecule type" value="mRNA"/>
</dbReference>
<dbReference type="EMBL" id="AF161419">
    <property type="protein sequence ID" value="AAF28979.1"/>
    <property type="status" value="ALT_FRAME"/>
    <property type="molecule type" value="mRNA"/>
</dbReference>
<dbReference type="EMBL" id="AL603623">
    <property type="protein sequence ID" value="CAC48260.2"/>
    <property type="molecule type" value="Transcribed_RNA"/>
</dbReference>
<dbReference type="EMBL" id="AC004537">
    <property type="protein sequence ID" value="AAQ93373.1"/>
    <property type="molecule type" value="Genomic_DNA"/>
</dbReference>
<dbReference type="EMBL" id="BC009777">
    <property type="protein sequence ID" value="AAH09777.1"/>
    <property type="molecule type" value="mRNA"/>
</dbReference>
<dbReference type="EMBL" id="BC009777">
    <property type="protein sequence ID" value="AAQ93374.1"/>
    <property type="molecule type" value="mRNA"/>
</dbReference>
<dbReference type="EMBL" id="BC010851">
    <property type="protein sequence ID" value="AAH10851.1"/>
    <property type="molecule type" value="mRNA"/>
</dbReference>
<dbReference type="EMBL" id="BC062634">
    <property type="protein sequence ID" value="AAH09776.1"/>
    <property type="molecule type" value="mRNA"/>
</dbReference>
<dbReference type="EMBL" id="BC062634">
    <property type="protein sequence ID" value="AAH62634.1"/>
    <property type="molecule type" value="mRNA"/>
</dbReference>
<dbReference type="EMBL" id="BC073865">
    <property type="protein sequence ID" value="AAH73865.1"/>
    <property type="status" value="ALT_SEQ"/>
    <property type="molecule type" value="mRNA"/>
</dbReference>
<dbReference type="EMBL" id="BC093091">
    <property type="protein sequence ID" value="AAH93091.1"/>
    <property type="molecule type" value="mRNA"/>
</dbReference>
<dbReference type="EMBL" id="BC093689">
    <property type="protein sequence ID" value="AAH93689.1"/>
    <property type="molecule type" value="mRNA"/>
</dbReference>
<dbReference type="EMBL" id="BC101609">
    <property type="protein sequence ID" value="AAI01610.1"/>
    <property type="molecule type" value="mRNA"/>
</dbReference>
<dbReference type="CCDS" id="CCDS35497.1">
    <molecule id="Q9NXR8-2"/>
</dbReference>
<dbReference type="CCDS" id="CCDS5778.1">
    <molecule id="Q9NXR8-1"/>
</dbReference>
<dbReference type="RefSeq" id="NP_061944.2">
    <molecule id="Q9NXR8-1"/>
    <property type="nucleotide sequence ID" value="NM_019071.2"/>
</dbReference>
<dbReference type="RefSeq" id="NP_938008.1">
    <molecule id="Q9NXR8-2"/>
    <property type="nucleotide sequence ID" value="NM_198267.2"/>
</dbReference>
<dbReference type="RefSeq" id="XP_047276491.1">
    <molecule id="Q9NXR8-3"/>
    <property type="nucleotide sequence ID" value="XM_047420535.1"/>
</dbReference>
<dbReference type="RefSeq" id="XP_054214486.1">
    <molecule id="Q9NXR8-3"/>
    <property type="nucleotide sequence ID" value="XM_054358511.1"/>
</dbReference>
<dbReference type="PDB" id="1X4I">
    <property type="method" value="NMR"/>
    <property type="chains" value="A=362-418"/>
</dbReference>
<dbReference type="PDB" id="7ZMX">
    <property type="method" value="X-ray"/>
    <property type="resolution" value="1.20 A"/>
    <property type="chains" value="A/B=358-411"/>
</dbReference>
<dbReference type="PDBsum" id="1X4I"/>
<dbReference type="PDBsum" id="7ZMX"/>
<dbReference type="SMR" id="Q9NXR8"/>
<dbReference type="BioGRID" id="120041">
    <property type="interactions" value="93"/>
</dbReference>
<dbReference type="ComplexPortal" id="CPX-709">
    <property type="entry name" value="Piccolo NuA4 histone acetyltransferase complex"/>
</dbReference>
<dbReference type="ComplexPortal" id="CPX-978">
    <property type="entry name" value="NuA4 histone acetyltransferase complex"/>
</dbReference>
<dbReference type="CORUM" id="Q9NXR8"/>
<dbReference type="DIP" id="DIP-34303N"/>
<dbReference type="FunCoup" id="Q9NXR8">
    <property type="interactions" value="2722"/>
</dbReference>
<dbReference type="IntAct" id="Q9NXR8">
    <property type="interactions" value="61"/>
</dbReference>
<dbReference type="MINT" id="Q9NXR8"/>
<dbReference type="STRING" id="9606.ENSP00000320566"/>
<dbReference type="GlyGen" id="Q9NXR8">
    <property type="glycosylation" value="1 site, 1 O-linked glycan (1 site)"/>
</dbReference>
<dbReference type="iPTMnet" id="Q9NXR8"/>
<dbReference type="PhosphoSitePlus" id="Q9NXR8"/>
<dbReference type="BioMuta" id="ING3"/>
<dbReference type="jPOST" id="Q9NXR8"/>
<dbReference type="MassIVE" id="Q9NXR8"/>
<dbReference type="PaxDb" id="9606-ENSP00000320566"/>
<dbReference type="PeptideAtlas" id="Q9NXR8"/>
<dbReference type="ProteomicsDB" id="83128">
    <molecule id="Q9NXR8-1"/>
</dbReference>
<dbReference type="ProteomicsDB" id="83129">
    <molecule id="Q9NXR8-2"/>
</dbReference>
<dbReference type="ProteomicsDB" id="83130">
    <molecule id="Q9NXR8-3"/>
</dbReference>
<dbReference type="Pumba" id="Q9NXR8"/>
<dbReference type="Antibodypedia" id="31689">
    <property type="antibodies" value="240 antibodies from 32 providers"/>
</dbReference>
<dbReference type="DNASU" id="54556"/>
<dbReference type="Ensembl" id="ENST00000315870.10">
    <molecule id="Q9NXR8-1"/>
    <property type="protein sequence ID" value="ENSP00000320566.5"/>
    <property type="gene ID" value="ENSG00000071243.16"/>
</dbReference>
<dbReference type="Ensembl" id="ENST00000339121.9">
    <molecule id="Q9NXR8-2"/>
    <property type="protein sequence ID" value="ENSP00000341697.5"/>
    <property type="gene ID" value="ENSG00000071243.16"/>
</dbReference>
<dbReference type="Ensembl" id="ENST00000427726.5">
    <molecule id="Q9NXR8-3"/>
    <property type="protein sequence ID" value="ENSP00000410406.1"/>
    <property type="gene ID" value="ENSG00000071243.16"/>
</dbReference>
<dbReference type="GeneID" id="54556"/>
<dbReference type="KEGG" id="hsa:54556"/>
<dbReference type="MANE-Select" id="ENST00000315870.10">
    <property type="protein sequence ID" value="ENSP00000320566.5"/>
    <property type="RefSeq nucleotide sequence ID" value="NM_019071.3"/>
    <property type="RefSeq protein sequence ID" value="NP_061944.2"/>
</dbReference>
<dbReference type="UCSC" id="uc003vjl.4">
    <molecule id="Q9NXR8-1"/>
    <property type="organism name" value="human"/>
</dbReference>
<dbReference type="AGR" id="HGNC:14587"/>
<dbReference type="CTD" id="54556"/>
<dbReference type="DisGeNET" id="54556"/>
<dbReference type="GeneCards" id="ING3"/>
<dbReference type="HGNC" id="HGNC:14587">
    <property type="gene designation" value="ING3"/>
</dbReference>
<dbReference type="HPA" id="ENSG00000071243">
    <property type="expression patterns" value="Tissue enriched (bone)"/>
</dbReference>
<dbReference type="MalaCards" id="ING3"/>
<dbReference type="MIM" id="275355">
    <property type="type" value="phenotype"/>
</dbReference>
<dbReference type="MIM" id="607493">
    <property type="type" value="gene"/>
</dbReference>
<dbReference type="neXtProt" id="NX_Q9NXR8"/>
<dbReference type="OpenTargets" id="ENSG00000071243"/>
<dbReference type="PharmGKB" id="PA29875"/>
<dbReference type="VEuPathDB" id="HostDB:ENSG00000071243"/>
<dbReference type="eggNOG" id="KOG1973">
    <property type="taxonomic scope" value="Eukaryota"/>
</dbReference>
<dbReference type="GeneTree" id="ENSGT00940000156619"/>
<dbReference type="HOGENOM" id="CLU_031900_0_0_1"/>
<dbReference type="InParanoid" id="Q9NXR8"/>
<dbReference type="OMA" id="YEWFHWK"/>
<dbReference type="OrthoDB" id="5411773at2759"/>
<dbReference type="PAN-GO" id="Q9NXR8">
    <property type="GO annotations" value="3 GO annotations based on evolutionary models"/>
</dbReference>
<dbReference type="PhylomeDB" id="Q9NXR8"/>
<dbReference type="TreeFam" id="TF106497"/>
<dbReference type="PathwayCommons" id="Q9NXR8"/>
<dbReference type="Reactome" id="R-HSA-3214847">
    <property type="pathway name" value="HATs acetylate histones"/>
</dbReference>
<dbReference type="SignaLink" id="Q9NXR8"/>
<dbReference type="SIGNOR" id="Q9NXR8"/>
<dbReference type="BioGRID-ORCS" id="54556">
    <property type="hits" value="377 hits in 1177 CRISPR screens"/>
</dbReference>
<dbReference type="ChiTaRS" id="ING3">
    <property type="organism name" value="human"/>
</dbReference>
<dbReference type="EvolutionaryTrace" id="Q9NXR8"/>
<dbReference type="GeneWiki" id="ING3"/>
<dbReference type="GenomeRNAi" id="54556"/>
<dbReference type="Pharos" id="Q9NXR8">
    <property type="development level" value="Tbio"/>
</dbReference>
<dbReference type="PRO" id="PR:Q9NXR8"/>
<dbReference type="Proteomes" id="UP000005640">
    <property type="component" value="Chromosome 7"/>
</dbReference>
<dbReference type="RNAct" id="Q9NXR8">
    <property type="molecule type" value="protein"/>
</dbReference>
<dbReference type="Bgee" id="ENSG00000071243">
    <property type="expression patterns" value="Expressed in secondary oocyte and 205 other cell types or tissues"/>
</dbReference>
<dbReference type="ExpressionAtlas" id="Q9NXR8">
    <property type="expression patterns" value="baseline and differential"/>
</dbReference>
<dbReference type="GO" id="GO:0035267">
    <property type="term" value="C:NuA4 histone acetyltransferase complex"/>
    <property type="evidence" value="ECO:0000314"/>
    <property type="project" value="UniProtKB"/>
</dbReference>
<dbReference type="GO" id="GO:0005654">
    <property type="term" value="C:nucleoplasm"/>
    <property type="evidence" value="ECO:0000314"/>
    <property type="project" value="HPA"/>
</dbReference>
<dbReference type="GO" id="GO:0000786">
    <property type="term" value="C:nucleosome"/>
    <property type="evidence" value="ECO:0000314"/>
    <property type="project" value="ComplexPortal"/>
</dbReference>
<dbReference type="GO" id="GO:0005634">
    <property type="term" value="C:nucleus"/>
    <property type="evidence" value="ECO:0000303"/>
    <property type="project" value="ComplexPortal"/>
</dbReference>
<dbReference type="GO" id="GO:0032777">
    <property type="term" value="C:piccolo histone acetyltransferase complex"/>
    <property type="evidence" value="ECO:0000314"/>
    <property type="project" value="UniProtKB"/>
</dbReference>
<dbReference type="GO" id="GO:0000812">
    <property type="term" value="C:Swr1 complex"/>
    <property type="evidence" value="ECO:0000314"/>
    <property type="project" value="UniProtKB"/>
</dbReference>
<dbReference type="GO" id="GO:0140002">
    <property type="term" value="F:histone H3K4me3 reader activity"/>
    <property type="evidence" value="ECO:0000314"/>
    <property type="project" value="UniProtKB"/>
</dbReference>
<dbReference type="GO" id="GO:0043997">
    <property type="term" value="F:histone H4K12 acetyltransferase activity"/>
    <property type="evidence" value="ECO:0000314"/>
    <property type="project" value="GO_Central"/>
</dbReference>
<dbReference type="GO" id="GO:0046972">
    <property type="term" value="F:histone H4K16 acetyltransferase activity"/>
    <property type="evidence" value="ECO:0000314"/>
    <property type="project" value="GO_Central"/>
</dbReference>
<dbReference type="GO" id="GO:0043995">
    <property type="term" value="F:histone H4K5 acetyltransferase activity"/>
    <property type="evidence" value="ECO:0000314"/>
    <property type="project" value="GO_Central"/>
</dbReference>
<dbReference type="GO" id="GO:0043996">
    <property type="term" value="F:histone H4K8 acetyltransferase activity"/>
    <property type="evidence" value="ECO:0000314"/>
    <property type="project" value="GO_Central"/>
</dbReference>
<dbReference type="GO" id="GO:0035064">
    <property type="term" value="F:methylated histone binding"/>
    <property type="evidence" value="ECO:0007669"/>
    <property type="project" value="UniProtKB-ARBA"/>
</dbReference>
<dbReference type="GO" id="GO:0008270">
    <property type="term" value="F:zinc ion binding"/>
    <property type="evidence" value="ECO:0007669"/>
    <property type="project" value="UniProtKB-KW"/>
</dbReference>
<dbReference type="GO" id="GO:0045893">
    <property type="term" value="P:positive regulation of DNA-templated transcription"/>
    <property type="evidence" value="ECO:0000303"/>
    <property type="project" value="ComplexPortal"/>
</dbReference>
<dbReference type="GO" id="GO:1905168">
    <property type="term" value="P:positive regulation of double-strand break repair via homologous recombination"/>
    <property type="evidence" value="ECO:0000314"/>
    <property type="project" value="ComplexPortal"/>
</dbReference>
<dbReference type="GO" id="GO:0045944">
    <property type="term" value="P:positive regulation of transcription by RNA polymerase II"/>
    <property type="evidence" value="ECO:0000303"/>
    <property type="project" value="ComplexPortal"/>
</dbReference>
<dbReference type="GO" id="GO:0042981">
    <property type="term" value="P:regulation of apoptotic process"/>
    <property type="evidence" value="ECO:0000303"/>
    <property type="project" value="ComplexPortal"/>
</dbReference>
<dbReference type="GO" id="GO:0051726">
    <property type="term" value="P:regulation of cell cycle"/>
    <property type="evidence" value="ECO:0000315"/>
    <property type="project" value="ComplexPortal"/>
</dbReference>
<dbReference type="GO" id="GO:2000779">
    <property type="term" value="P:regulation of double-strand break repair"/>
    <property type="evidence" value="ECO:0000303"/>
    <property type="project" value="ComplexPortal"/>
</dbReference>
<dbReference type="CDD" id="cd16858">
    <property type="entry name" value="ING_ING3_Yng2p"/>
    <property type="match status" value="1"/>
</dbReference>
<dbReference type="CDD" id="cd15585">
    <property type="entry name" value="PHD_ING3"/>
    <property type="match status" value="1"/>
</dbReference>
<dbReference type="FunFam" id="3.30.40.10:FF:000103">
    <property type="entry name" value="Inhibitor of growth protein"/>
    <property type="match status" value="1"/>
</dbReference>
<dbReference type="Gene3D" id="6.10.140.1740">
    <property type="match status" value="1"/>
</dbReference>
<dbReference type="Gene3D" id="3.30.40.10">
    <property type="entry name" value="Zinc/RING finger domain, C3HC4 (zinc finger)"/>
    <property type="match status" value="1"/>
</dbReference>
<dbReference type="InterPro" id="IPR042020">
    <property type="entry name" value="ING3_PHD"/>
</dbReference>
<dbReference type="InterPro" id="IPR028651">
    <property type="entry name" value="ING_fam"/>
</dbReference>
<dbReference type="InterPro" id="IPR024610">
    <property type="entry name" value="ING_N_histone-binding"/>
</dbReference>
<dbReference type="InterPro" id="IPR019786">
    <property type="entry name" value="Zinc_finger_PHD-type_CS"/>
</dbReference>
<dbReference type="InterPro" id="IPR011011">
    <property type="entry name" value="Znf_FYVE_PHD"/>
</dbReference>
<dbReference type="InterPro" id="IPR001965">
    <property type="entry name" value="Znf_PHD"/>
</dbReference>
<dbReference type="InterPro" id="IPR019787">
    <property type="entry name" value="Znf_PHD-finger"/>
</dbReference>
<dbReference type="InterPro" id="IPR013083">
    <property type="entry name" value="Znf_RING/FYVE/PHD"/>
</dbReference>
<dbReference type="PANTHER" id="PTHR10333">
    <property type="entry name" value="INHIBITOR OF GROWTH PROTEIN"/>
    <property type="match status" value="1"/>
</dbReference>
<dbReference type="PANTHER" id="PTHR10333:SF103">
    <property type="entry name" value="INHIBITOR OF GROWTH PROTEIN 3"/>
    <property type="match status" value="1"/>
</dbReference>
<dbReference type="Pfam" id="PF12998">
    <property type="entry name" value="ING"/>
    <property type="match status" value="1"/>
</dbReference>
<dbReference type="SMART" id="SM01408">
    <property type="entry name" value="ING"/>
    <property type="match status" value="1"/>
</dbReference>
<dbReference type="SMART" id="SM00249">
    <property type="entry name" value="PHD"/>
    <property type="match status" value="1"/>
</dbReference>
<dbReference type="SUPFAM" id="SSF57903">
    <property type="entry name" value="FYVE/PHD zinc finger"/>
    <property type="match status" value="1"/>
</dbReference>
<dbReference type="PROSITE" id="PS01359">
    <property type="entry name" value="ZF_PHD_1"/>
    <property type="match status" value="1"/>
</dbReference>
<dbReference type="PROSITE" id="PS50016">
    <property type="entry name" value="ZF_PHD_2"/>
    <property type="match status" value="1"/>
</dbReference>
<sequence>MLYLEDYLEMIEQLPMDLRDRFTEMREMDLQVQNAMDQLEQRVSEFFMNAKKNKPEWREEQMASIKKDYYKALEDADEKVQLANQIYDLVDRHLRKLDQELAKFKMELEADNAGITEILERRSLELDTPSQPVNNHHAHSHTPVEKRKYNPTSHHTTTDHIPEKKFKSEALLSTLTSDASKENTLGCRNNNSTASSNNAYNVNSSQPLGSYNIGSLSSGTGAGAITMAAAQAVQATAQMKEGRRTSSLKASYEAFKNNDFQLGKEFSMARETVGYSSSSALMTTLTQNASSSAADSRSGRKSKNNNKSSSQQSSSSSSSSSLSSCSSSSTVVQEISQQTTVVPESDSNSQVDWTYDPNEPRYCICNQVSYGEMVGCDNQDCPIEWFHYGCVGLTEAPKGKWYCPQCTAAMKRRGSRHK</sequence>
<reference key="1">
    <citation type="journal article" date="2003" name="Oncogene">
        <title>A novel PHD-finger motif protein, p47ING3, modulates p53-mediated transcription, cell cycle control, and apoptosis.</title>
        <authorList>
            <person name="Nagashima M."/>
            <person name="Shiseki M."/>
            <person name="Pedeux R.M."/>
            <person name="Okamura S."/>
            <person name="Kitahama-Shiseki M."/>
            <person name="Miura K."/>
            <person name="Yokota J."/>
            <person name="Harris C.C."/>
        </authorList>
    </citation>
    <scope>NUCLEOTIDE SEQUENCE [MRNA] (ISOFORM 1)</scope>
    <scope>ROLE IN P53 MEDIATED GROWTH SUPPRESSION</scope>
</reference>
<reference key="2">
    <citation type="submission" date="2000-09" db="EMBL/GenBank/DDBJ databases">
        <title>Cloning and characterization of p47ING3, a new member of the p33ING1 family of p53 regulators.</title>
        <authorList>
            <person name="Zenklusen J.C."/>
            <person name="Green E.D."/>
        </authorList>
    </citation>
    <scope>NUCLEOTIDE SEQUENCE [MRNA] (ISOFORM 1)</scope>
</reference>
<reference key="3">
    <citation type="journal article" date="2004" name="Nat. Genet.">
        <title>Complete sequencing and characterization of 21,243 full-length human cDNAs.</title>
        <authorList>
            <person name="Ota T."/>
            <person name="Suzuki Y."/>
            <person name="Nishikawa T."/>
            <person name="Otsuki T."/>
            <person name="Sugiyama T."/>
            <person name="Irie R."/>
            <person name="Wakamatsu A."/>
            <person name="Hayashi K."/>
            <person name="Sato H."/>
            <person name="Nagai K."/>
            <person name="Kimura K."/>
            <person name="Makita H."/>
            <person name="Sekine M."/>
            <person name="Obayashi M."/>
            <person name="Nishi T."/>
            <person name="Shibahara T."/>
            <person name="Tanaka T."/>
            <person name="Ishii S."/>
            <person name="Yamamoto J."/>
            <person name="Saito K."/>
            <person name="Kawai Y."/>
            <person name="Isono Y."/>
            <person name="Nakamura Y."/>
            <person name="Nagahari K."/>
            <person name="Murakami K."/>
            <person name="Yasuda T."/>
            <person name="Iwayanagi T."/>
            <person name="Wagatsuma M."/>
            <person name="Shiratori A."/>
            <person name="Sudo H."/>
            <person name="Hosoiri T."/>
            <person name="Kaku Y."/>
            <person name="Kodaira H."/>
            <person name="Kondo H."/>
            <person name="Sugawara M."/>
            <person name="Takahashi M."/>
            <person name="Kanda K."/>
            <person name="Yokoi T."/>
            <person name="Furuya T."/>
            <person name="Kikkawa E."/>
            <person name="Omura Y."/>
            <person name="Abe K."/>
            <person name="Kamihara K."/>
            <person name="Katsuta N."/>
            <person name="Sato K."/>
            <person name="Tanikawa M."/>
            <person name="Yamazaki M."/>
            <person name="Ninomiya K."/>
            <person name="Ishibashi T."/>
            <person name="Yamashita H."/>
            <person name="Murakawa K."/>
            <person name="Fujimori K."/>
            <person name="Tanai H."/>
            <person name="Kimata M."/>
            <person name="Watanabe M."/>
            <person name="Hiraoka S."/>
            <person name="Chiba Y."/>
            <person name="Ishida S."/>
            <person name="Ono Y."/>
            <person name="Takiguchi S."/>
            <person name="Watanabe S."/>
            <person name="Yosida M."/>
            <person name="Hotuta T."/>
            <person name="Kusano J."/>
            <person name="Kanehori K."/>
            <person name="Takahashi-Fujii A."/>
            <person name="Hara H."/>
            <person name="Tanase T.-O."/>
            <person name="Nomura Y."/>
            <person name="Togiya S."/>
            <person name="Komai F."/>
            <person name="Hara R."/>
            <person name="Takeuchi K."/>
            <person name="Arita M."/>
            <person name="Imose N."/>
            <person name="Musashino K."/>
            <person name="Yuuki H."/>
            <person name="Oshima A."/>
            <person name="Sasaki N."/>
            <person name="Aotsuka S."/>
            <person name="Yoshikawa Y."/>
            <person name="Matsunawa H."/>
            <person name="Ichihara T."/>
            <person name="Shiohata N."/>
            <person name="Sano S."/>
            <person name="Moriya S."/>
            <person name="Momiyama H."/>
            <person name="Satoh N."/>
            <person name="Takami S."/>
            <person name="Terashima Y."/>
            <person name="Suzuki O."/>
            <person name="Nakagawa S."/>
            <person name="Senoh A."/>
            <person name="Mizoguchi H."/>
            <person name="Goto Y."/>
            <person name="Shimizu F."/>
            <person name="Wakebe H."/>
            <person name="Hishigaki H."/>
            <person name="Watanabe T."/>
            <person name="Sugiyama A."/>
            <person name="Takemoto M."/>
            <person name="Kawakami B."/>
            <person name="Yamazaki M."/>
            <person name="Watanabe K."/>
            <person name="Kumagai A."/>
            <person name="Itakura S."/>
            <person name="Fukuzumi Y."/>
            <person name="Fujimori Y."/>
            <person name="Komiyama M."/>
            <person name="Tashiro H."/>
            <person name="Tanigami A."/>
            <person name="Fujiwara T."/>
            <person name="Ono T."/>
            <person name="Yamada K."/>
            <person name="Fujii Y."/>
            <person name="Ozaki K."/>
            <person name="Hirao M."/>
            <person name="Ohmori Y."/>
            <person name="Kawabata A."/>
            <person name="Hikiji T."/>
            <person name="Kobatake N."/>
            <person name="Inagaki H."/>
            <person name="Ikema Y."/>
            <person name="Okamoto S."/>
            <person name="Okitani R."/>
            <person name="Kawakami T."/>
            <person name="Noguchi S."/>
            <person name="Itoh T."/>
            <person name="Shigeta K."/>
            <person name="Senba T."/>
            <person name="Matsumura K."/>
            <person name="Nakajima Y."/>
            <person name="Mizuno T."/>
            <person name="Morinaga M."/>
            <person name="Sasaki M."/>
            <person name="Togashi T."/>
            <person name="Oyama M."/>
            <person name="Hata H."/>
            <person name="Watanabe M."/>
            <person name="Komatsu T."/>
            <person name="Mizushima-Sugano J."/>
            <person name="Satoh T."/>
            <person name="Shirai Y."/>
            <person name="Takahashi Y."/>
            <person name="Nakagawa K."/>
            <person name="Okumura K."/>
            <person name="Nagase T."/>
            <person name="Nomura N."/>
            <person name="Kikuchi H."/>
            <person name="Masuho Y."/>
            <person name="Yamashita R."/>
            <person name="Nakai K."/>
            <person name="Yada T."/>
            <person name="Nakamura Y."/>
            <person name="Ohara O."/>
            <person name="Isogai T."/>
            <person name="Sugano S."/>
        </authorList>
    </citation>
    <scope>NUCLEOTIDE SEQUENCE [LARGE SCALE MRNA] (ISOFORMS 1 AND 3)</scope>
    <source>
        <tissue>Skeletal muscle</tissue>
    </source>
</reference>
<reference key="4">
    <citation type="submission" date="1999-05" db="EMBL/GenBank/DDBJ databases">
        <title>Human partial CDS from CD34+ stem cells.</title>
        <authorList>
            <person name="Ye M."/>
            <person name="Zhang Q.-H."/>
            <person name="Zhou J."/>
            <person name="Shen Y."/>
            <person name="Wu X.-Y."/>
            <person name="Guan Z.Q."/>
            <person name="Wang L."/>
            <person name="Fan H.-Y."/>
            <person name="Mao Y.-F."/>
            <person name="Dai M."/>
            <person name="Huang Q.-H."/>
            <person name="Chen S.-J."/>
            <person name="Chen Z."/>
        </authorList>
    </citation>
    <scope>NUCLEOTIDE SEQUENCE [LARGE SCALE MRNA] (ISOFORM 2)</scope>
    <source>
        <tissue>Umbilical cord blood</tissue>
    </source>
</reference>
<reference key="5">
    <citation type="journal article" date="2007" name="BMC Genomics">
        <title>The full-ORF clone resource of the German cDNA consortium.</title>
        <authorList>
            <person name="Bechtel S."/>
            <person name="Rosenfelder H."/>
            <person name="Duda A."/>
            <person name="Schmidt C.P."/>
            <person name="Ernst U."/>
            <person name="Wellenreuther R."/>
            <person name="Mehrle A."/>
            <person name="Schuster C."/>
            <person name="Bahr A."/>
            <person name="Bloecker H."/>
            <person name="Heubner D."/>
            <person name="Hoerlein A."/>
            <person name="Michel G."/>
            <person name="Wedler H."/>
            <person name="Koehrer K."/>
            <person name="Ottenwaelder B."/>
            <person name="Poustka A."/>
            <person name="Wiemann S."/>
            <person name="Schupp I."/>
        </authorList>
    </citation>
    <scope>NUCLEOTIDE SEQUENCE [LARGE SCALE MRNA] (ISOFORM 1)</scope>
    <source>
        <tissue>Uterus</tissue>
    </source>
</reference>
<reference key="6">
    <citation type="journal article" date="2003" name="Nature">
        <title>The DNA sequence of human chromosome 7.</title>
        <authorList>
            <person name="Hillier L.W."/>
            <person name="Fulton R.S."/>
            <person name="Fulton L.A."/>
            <person name="Graves T.A."/>
            <person name="Pepin K.H."/>
            <person name="Wagner-McPherson C."/>
            <person name="Layman D."/>
            <person name="Maas J."/>
            <person name="Jaeger S."/>
            <person name="Walker R."/>
            <person name="Wylie K."/>
            <person name="Sekhon M."/>
            <person name="Becker M.C."/>
            <person name="O'Laughlin M.D."/>
            <person name="Schaller M.E."/>
            <person name="Fewell G.A."/>
            <person name="Delehaunty K.D."/>
            <person name="Miner T.L."/>
            <person name="Nash W.E."/>
            <person name="Cordes M."/>
            <person name="Du H."/>
            <person name="Sun H."/>
            <person name="Edwards J."/>
            <person name="Bradshaw-Cordum H."/>
            <person name="Ali J."/>
            <person name="Andrews S."/>
            <person name="Isak A."/>
            <person name="Vanbrunt A."/>
            <person name="Nguyen C."/>
            <person name="Du F."/>
            <person name="Lamar B."/>
            <person name="Courtney L."/>
            <person name="Kalicki J."/>
            <person name="Ozersky P."/>
            <person name="Bielicki L."/>
            <person name="Scott K."/>
            <person name="Holmes A."/>
            <person name="Harkins R."/>
            <person name="Harris A."/>
            <person name="Strong C.M."/>
            <person name="Hou S."/>
            <person name="Tomlinson C."/>
            <person name="Dauphin-Kohlberg S."/>
            <person name="Kozlowicz-Reilly A."/>
            <person name="Leonard S."/>
            <person name="Rohlfing T."/>
            <person name="Rock S.M."/>
            <person name="Tin-Wollam A.-M."/>
            <person name="Abbott A."/>
            <person name="Minx P."/>
            <person name="Maupin R."/>
            <person name="Strowmatt C."/>
            <person name="Latreille P."/>
            <person name="Miller N."/>
            <person name="Johnson D."/>
            <person name="Murray J."/>
            <person name="Woessner J.P."/>
            <person name="Wendl M.C."/>
            <person name="Yang S.-P."/>
            <person name="Schultz B.R."/>
            <person name="Wallis J.W."/>
            <person name="Spieth J."/>
            <person name="Bieri T.A."/>
            <person name="Nelson J.O."/>
            <person name="Berkowicz N."/>
            <person name="Wohldmann P.E."/>
            <person name="Cook L.L."/>
            <person name="Hickenbotham M.T."/>
            <person name="Eldred J."/>
            <person name="Williams D."/>
            <person name="Bedell J.A."/>
            <person name="Mardis E.R."/>
            <person name="Clifton S.W."/>
            <person name="Chissoe S.L."/>
            <person name="Marra M.A."/>
            <person name="Raymond C."/>
            <person name="Haugen E."/>
            <person name="Gillett W."/>
            <person name="Zhou Y."/>
            <person name="James R."/>
            <person name="Phelps K."/>
            <person name="Iadanoto S."/>
            <person name="Bubb K."/>
            <person name="Simms E."/>
            <person name="Levy R."/>
            <person name="Clendenning J."/>
            <person name="Kaul R."/>
            <person name="Kent W.J."/>
            <person name="Furey T.S."/>
            <person name="Baertsch R.A."/>
            <person name="Brent M.R."/>
            <person name="Keibler E."/>
            <person name="Flicek P."/>
            <person name="Bork P."/>
            <person name="Suyama M."/>
            <person name="Bailey J.A."/>
            <person name="Portnoy M.E."/>
            <person name="Torrents D."/>
            <person name="Chinwalla A.T."/>
            <person name="Gish W.R."/>
            <person name="Eddy S.R."/>
            <person name="McPherson J.D."/>
            <person name="Olson M.V."/>
            <person name="Eichler E.E."/>
            <person name="Green E.D."/>
            <person name="Waterston R.H."/>
            <person name="Wilson R.K."/>
        </authorList>
    </citation>
    <scope>NUCLEOTIDE SEQUENCE [LARGE SCALE GENOMIC DNA]</scope>
</reference>
<reference key="7">
    <citation type="journal article" date="2004" name="Genome Res.">
        <title>The status, quality, and expansion of the NIH full-length cDNA project: the Mammalian Gene Collection (MGC).</title>
        <authorList>
            <consortium name="The MGC Project Team"/>
        </authorList>
    </citation>
    <scope>NUCLEOTIDE SEQUENCE [LARGE SCALE MRNA] (ISOFORMS 2 AND 3)</scope>
    <source>
        <tissue>Blood</tissue>
        <tissue>Liver</tissue>
        <tissue>Lung</tissue>
        <tissue>Pancreas</tissue>
        <tissue>Urinary bladder</tissue>
    </source>
</reference>
<reference key="8">
    <citation type="journal article" date="2003" name="J. Biol. Chem.">
        <title>Identification of new subunits of the multiprotein mammalian TRRAP/TIP60-containing histone acetyltransferase complex.</title>
        <authorList>
            <person name="Cai Y."/>
            <person name="Jin J."/>
            <person name="Tomomori-Sato C."/>
            <person name="Sato S."/>
            <person name="Sorokina I."/>
            <person name="Parmely T.J."/>
            <person name="Conaway R.C."/>
            <person name="Conaway J.W."/>
        </authorList>
    </citation>
    <scope>PROTEIN SEQUENCE OF 80-92</scope>
    <scope>IDENTIFICATION IN NUA4 COMPLEX</scope>
    <scope>IDENTIFICATION BY MASS SPECTROMETRY</scope>
</reference>
<reference key="9">
    <citation type="journal article" date="2004" name="Curr. Opin. Genet. Dev.">
        <title>The highly conserved and multifunctional NuA4 HAT complex.</title>
        <authorList>
            <person name="Doyon Y."/>
            <person name="Cote J."/>
        </authorList>
    </citation>
    <scope>REVIEW ON NUA4 COMPLEX</scope>
</reference>
<reference key="10">
    <citation type="journal article" date="2004" name="Mol. Cell. Biol.">
        <title>Structural and functional conservation of the NuA4 histone acetyltransferase complex from yeast to humans.</title>
        <authorList>
            <person name="Doyon Y."/>
            <person name="Selleck W."/>
            <person name="Lane W.S."/>
            <person name="Tan S."/>
            <person name="Cote J."/>
        </authorList>
    </citation>
    <scope>FUNCTION</scope>
    <scope>IDENTIFICATION BY MASS SPECTROMETRY</scope>
    <scope>IDENTIFICATION IN NUA4 COMPLEX</scope>
</reference>
<reference key="11">
    <citation type="journal article" date="2006" name="Mol. Cell">
        <title>ING tumor suppressor proteins are critical regulators of chromatin acetylation required for genome expression and perpetuation.</title>
        <authorList>
            <person name="Doyon Y."/>
            <person name="Cayrou C."/>
            <person name="Ullah M."/>
            <person name="Landry A.-J."/>
            <person name="Cote V."/>
            <person name="Selleck W."/>
            <person name="Lane W.S."/>
            <person name="Tan S."/>
            <person name="Yang X.-J."/>
            <person name="Cote J."/>
        </authorList>
    </citation>
    <scope>IDENTIFICATION IN NUA4 COMPLEX</scope>
</reference>
<reference key="12">
    <citation type="journal article" date="2006" name="Nature">
        <title>ING2 PHD domain links histone H3 lysine 4 methylation to active gene repression.</title>
        <authorList>
            <person name="Shi X."/>
            <person name="Hong T."/>
            <person name="Walter K.L."/>
            <person name="Ewalt M."/>
            <person name="Michishita E."/>
            <person name="Hung T."/>
            <person name="Carney D."/>
            <person name="Pena P."/>
            <person name="Lan F."/>
            <person name="Kaadige M.R."/>
            <person name="Lacoste N."/>
            <person name="Cayrou C."/>
            <person name="Davrazou F."/>
            <person name="Saha A."/>
            <person name="Cairns B.R."/>
            <person name="Ayer D.E."/>
            <person name="Kutateladze T.G."/>
            <person name="Shi Y."/>
            <person name="Cote J."/>
            <person name="Chua K.F."/>
            <person name="Gozani O."/>
        </authorList>
    </citation>
    <scope>DOMAIN PHD-TYPE ZINC-FINGER</scope>
    <scope>INTERACTION WITH HISTONES H3K4ME3 AND H3K4ME2</scope>
</reference>
<reference key="13">
    <citation type="journal article" date="2009" name="Plant J.">
        <title>Arabidopsis ING and Alfin1-like protein families localize to the nucleus and bind to H3K4me3/2 via plant homeodomain fingers.</title>
        <authorList>
            <person name="Lee W.Y."/>
            <person name="Lee D."/>
            <person name="Chung W.I."/>
            <person name="Kwon C.S."/>
        </authorList>
    </citation>
    <scope>DOMAIN PHD-TYPE ZINC-FINGER</scope>
    <scope>INTERACTION WITH HISTONES H3K4ME3 AND H3K4ME2</scope>
</reference>
<reference key="14">
    <citation type="journal article" date="2009" name="Science">
        <title>Lysine acetylation targets protein complexes and co-regulates major cellular functions.</title>
        <authorList>
            <person name="Choudhary C."/>
            <person name="Kumar C."/>
            <person name="Gnad F."/>
            <person name="Nielsen M.L."/>
            <person name="Rehman M."/>
            <person name="Walther T.C."/>
            <person name="Olsen J.V."/>
            <person name="Mann M."/>
        </authorList>
    </citation>
    <scope>ACETYLATION [LARGE SCALE ANALYSIS] AT LYS-264</scope>
    <scope>IDENTIFICATION BY MASS SPECTROMETRY [LARGE SCALE ANALYSIS]</scope>
</reference>
<reference key="15">
    <citation type="journal article" date="2014" name="Nat. Struct. Mol. Biol.">
        <title>Uncovering global SUMOylation signaling networks in a site-specific manner.</title>
        <authorList>
            <person name="Hendriks I.A."/>
            <person name="D'Souza R.C."/>
            <person name="Yang B."/>
            <person name="Verlaan-de Vries M."/>
            <person name="Mann M."/>
            <person name="Vertegaal A.C."/>
        </authorList>
    </citation>
    <scope>SUMOYLATION [LARGE SCALE ANALYSIS] AT LYS-167</scope>
    <scope>IDENTIFICATION BY MASS SPECTROMETRY [LARGE SCALE ANALYSIS]</scope>
</reference>
<reference key="16">
    <citation type="journal article" date="2014" name="Nature">
        <title>ANP32E is a histone chaperone that removes H2A.Z from chromatin.</title>
        <authorList>
            <person name="Obri A."/>
            <person name="Ouararhni K."/>
            <person name="Papin C."/>
            <person name="Diebold M.L."/>
            <person name="Padmanabhan K."/>
            <person name="Marek M."/>
            <person name="Stoll I."/>
            <person name="Roy L."/>
            <person name="Reilly P.T."/>
            <person name="Mak T.W."/>
            <person name="Dimitrov S."/>
            <person name="Romier C."/>
            <person name="Hamiche A."/>
        </authorList>
    </citation>
    <scope>FUNCTION</scope>
    <scope>IDENTIFICATION IN THE SWR1-LIKE COMPLEX</scope>
</reference>
<reference key="17">
    <citation type="journal article" date="2015" name="Cell Rep.">
        <title>SUMO-2 orchestrates chromatin modifiers in response to DNA damage.</title>
        <authorList>
            <person name="Hendriks I.A."/>
            <person name="Treffers L.W."/>
            <person name="Verlaan-de Vries M."/>
            <person name="Olsen J.V."/>
            <person name="Vertegaal A.C."/>
        </authorList>
    </citation>
    <scope>SUMOYLATION [LARGE SCALE ANALYSIS] AT LYS-167</scope>
    <scope>IDENTIFICATION BY MASS SPECTROMETRY [LARGE SCALE ANALYSIS]</scope>
</reference>
<reference key="18">
    <citation type="journal article" date="2017" name="Nat. Struct. Mol. Biol.">
        <title>Site-specific mapping of the human SUMO proteome reveals co-modification with phosphorylation.</title>
        <authorList>
            <person name="Hendriks I.A."/>
            <person name="Lyon D."/>
            <person name="Young C."/>
            <person name="Jensen L.J."/>
            <person name="Vertegaal A.C."/>
            <person name="Nielsen M.L."/>
        </authorList>
    </citation>
    <scope>SUMOYLATION [LARGE SCALE ANALYSIS] AT LYS-148; LYS-165; LYS-167 AND LYS-256</scope>
    <scope>IDENTIFICATION BY MASS SPECTROMETRY [LARGE SCALE ANALYSIS]</scope>
</reference>
<reference key="19">
    <citation type="submission" date="2006-11" db="PDB data bank">
        <title>Solution structure of PHD domain in inhibitor of growth protein 3 (ING3) antigen 7.</title>
        <authorList>
            <consortium name="RIKEN structural genomics initiative (RSGI)"/>
        </authorList>
    </citation>
    <scope>STRUCTURE BY NMR OF 362-418</scope>
</reference>
<reference key="20">
    <citation type="journal article" date="2002" name="Oncogene">
        <title>Allelic loss and reduced expression of the ING3, a candidate tumor suppressor gene at 7q31, in human head and neck cancers.</title>
        <authorList>
            <person name="Gunduz M."/>
            <person name="Ouchida M."/>
            <person name="Fukushima K."/>
            <person name="Ito S."/>
            <person name="Jitsumori Y."/>
            <person name="Nakashima T."/>
            <person name="Nagai N."/>
            <person name="Nishizaki K."/>
            <person name="Shimizu K."/>
        </authorList>
    </citation>
    <scope>VARIANT HNSCC GLY-20</scope>
</reference>
<name>ING3_HUMAN</name>
<protein>
    <recommendedName>
        <fullName>Inhibitor of growth protein 3</fullName>
    </recommendedName>
    <alternativeName>
        <fullName>p47ING3</fullName>
    </alternativeName>
</protein>
<evidence type="ECO:0000250" key="1">
    <source>
        <dbReference type="UniProtKB" id="Q8VEK6"/>
    </source>
</evidence>
<evidence type="ECO:0000250" key="2">
    <source>
        <dbReference type="UniProtKB" id="Q9UK53"/>
    </source>
</evidence>
<evidence type="ECO:0000255" key="3">
    <source>
        <dbReference type="PROSITE-ProRule" id="PRU00146"/>
    </source>
</evidence>
<evidence type="ECO:0000256" key="4">
    <source>
        <dbReference type="SAM" id="MobiDB-lite"/>
    </source>
</evidence>
<evidence type="ECO:0000269" key="5">
    <source>
    </source>
</evidence>
<evidence type="ECO:0000269" key="6">
    <source>
    </source>
</evidence>
<evidence type="ECO:0000269" key="7">
    <source>
    </source>
</evidence>
<evidence type="ECO:0000269" key="8">
    <source>
    </source>
</evidence>
<evidence type="ECO:0000269" key="9">
    <source>
    </source>
</evidence>
<evidence type="ECO:0000269" key="10">
    <source>
    </source>
</evidence>
<evidence type="ECO:0000269" key="11">
    <source>
    </source>
</evidence>
<evidence type="ECO:0000269" key="12">
    <source>
    </source>
</evidence>
<evidence type="ECO:0000303" key="13">
    <source>
    </source>
</evidence>
<evidence type="ECO:0000303" key="14">
    <source>
    </source>
</evidence>
<evidence type="ECO:0000303" key="15">
    <source ref="4"/>
</evidence>
<evidence type="ECO:0000305" key="16"/>
<evidence type="ECO:0007744" key="17">
    <source>
    </source>
</evidence>
<evidence type="ECO:0007744" key="18">
    <source>
    </source>
</evidence>
<evidence type="ECO:0007744" key="19">
    <source>
    </source>
</evidence>
<evidence type="ECO:0007744" key="20">
    <source>
    </source>
</evidence>
<evidence type="ECO:0007829" key="21">
    <source>
        <dbReference type="PDB" id="7ZMX"/>
    </source>
</evidence>
<accession>Q9NXR8</accession>
<accession>A8K790</accession>
<accession>O60394</accession>
<accession>Q567P3</accession>
<accession>Q6GMT3</accession>
<accession>Q7Z762</accession>
<accession>Q969G0</accession>
<accession>Q96DT4</accession>
<accession>Q9HC99</accession>
<accession>Q9P081</accession>
<comment type="function">
    <text evidence="6 8 12">Component of the NuA4 histone acetyltransferase (HAT) complex which is involved in transcriptional activation of select genes principally by acetylation of nucleosomal histones H4 and H2A. This modification may both alter nucleosome - DNA interactions and promote interaction of the modified histones with other proteins which positively regulate transcription. This complex may be required for the activation of transcriptional programs associated with oncogene and proto-oncogene mediated growth induction, tumor suppressor mediated growth arrest and replicative senescence, apoptosis, and DNA repair. NuA4 may also play a direct role in DNA repair when directly recruited to sites of DNA damage. Component of a SWR1-like complex that specifically mediates the removal of histone H2A.Z/H2AZ1 from the nucleosome.</text>
</comment>
<comment type="subunit">
    <text evidence="7 8 9 10 11 12">Interacts with H3K4me3 and to a lesser extent with H3K4me2. Component of the NuA4 histone acetyltransferase complex which contains the catalytic subunit KAT5/TIP60 and the subunits EP400, TRRAP/PAF400, BRD8/SMAP, EPC1, DMAP1/DNMAP1, RUVBL1/TIP49, RUVBL2, ING3, actin, ACTL6A/BAF53A, MORF4L1/MRG15, MORF4L2/MRGX, MRGBP, YEATS4/GAS41, VPS72/YL1 and MEAF6. The NuA4 complex interacts with MYC and the adenovirus E1A protein. HTATTIP/TIP60, EPC1, and ING3 together constitute a minimal HAT complex termed Piccolo NuA4. Component of a SWR1-like complex.</text>
</comment>
<comment type="subcellular location">
    <subcellularLocation>
        <location>Nucleus</location>
    </subcellularLocation>
</comment>
<comment type="alternative products">
    <event type="alternative splicing"/>
    <isoform>
        <id>Q9NXR8-1</id>
        <name>1</name>
        <sequence type="displayed"/>
    </isoform>
    <isoform>
        <id>Q9NXR8-2</id>
        <name>2</name>
        <sequence type="described" ref="VSP_012885 VSP_012886"/>
    </isoform>
    <isoform>
        <id>Q9NXR8-3</id>
        <name>3</name>
        <sequence type="described" ref="VSP_012887 VSP_012888"/>
    </isoform>
</comment>
<comment type="tissue specificity">
    <text>Expressed in brain, heart, kidney, liver, lung, ovaries, placenta, prostate, skeletal muscle, small intestine, spleen, testis and thymus.</text>
</comment>
<comment type="domain">
    <text evidence="10 11">The PHD-type zinc finger mediates the binding to H3K4me3.</text>
</comment>
<comment type="disease" evidence="5">
    <disease id="DI-01696">
        <name>Squamous cell carcinoma of the head and neck</name>
        <acronym>HNSCC</acronym>
        <description>A non-melanoma skin cancer affecting the head and neck. The hallmark of cutaneous SCC is malignant transformation of normal epidermal keratinocytes.</description>
        <dbReference type="MIM" id="275355"/>
    </disease>
    <text>The disease may be caused by variants affecting the gene represented in this entry.</text>
</comment>
<comment type="miscellaneous">
    <molecule>Isoform 2</molecule>
    <text evidence="16">May be produced at very low levels due to a premature stop codon in the mRNA, leading to nonsense-mediated mRNA decay.</text>
</comment>
<comment type="miscellaneous">
    <molecule>Isoform 3</molecule>
    <text evidence="16">May be produced at very low levels due to a premature stop codon in the mRNA, leading to nonsense-mediated mRNA decay.</text>
</comment>
<comment type="similarity">
    <text evidence="16">Belongs to the ING family.</text>
</comment>
<comment type="sequence caution" evidence="16">
    <conflict type="frameshift">
        <sequence resource="EMBL-CDS" id="AAF28979"/>
    </conflict>
</comment>
<comment type="sequence caution" evidence="16">
    <conflict type="miscellaneous discrepancy">
        <sequence resource="EMBL-CDS" id="AAH73865"/>
    </conflict>
    <text>Intron retention.</text>
</comment>
<keyword id="KW-0002">3D-structure</keyword>
<keyword id="KW-0007">Acetylation</keyword>
<keyword id="KW-0025">Alternative splicing</keyword>
<keyword id="KW-0156">Chromatin regulator</keyword>
<keyword id="KW-0903">Direct protein sequencing</keyword>
<keyword id="KW-0225">Disease variant</keyword>
<keyword id="KW-0341">Growth regulation</keyword>
<keyword id="KW-1017">Isopeptide bond</keyword>
<keyword id="KW-0479">Metal-binding</keyword>
<keyword id="KW-0539">Nucleus</keyword>
<keyword id="KW-1267">Proteomics identification</keyword>
<keyword id="KW-1185">Reference proteome</keyword>
<keyword id="KW-0804">Transcription</keyword>
<keyword id="KW-0805">Transcription regulation</keyword>
<keyword id="KW-0832">Ubl conjugation</keyword>
<keyword id="KW-0862">Zinc</keyword>
<keyword id="KW-0863">Zinc-finger</keyword>
<feature type="chain" id="PRO_0000212665" description="Inhibitor of growth protein 3">
    <location>
        <begin position="1"/>
        <end position="418"/>
    </location>
</feature>
<feature type="zinc finger region" description="PHD-type" evidence="3">
    <location>
        <begin position="360"/>
        <end position="409"/>
    </location>
</feature>
<feature type="region of interest" description="Disordered" evidence="4">
    <location>
        <begin position="127"/>
        <end position="165"/>
    </location>
</feature>
<feature type="region of interest" description="Disordered" evidence="4">
    <location>
        <begin position="286"/>
        <end position="325"/>
    </location>
</feature>
<feature type="compositionally biased region" description="Basic and acidic residues" evidence="4">
    <location>
        <begin position="156"/>
        <end position="165"/>
    </location>
</feature>
<feature type="compositionally biased region" description="Low complexity" evidence="4">
    <location>
        <begin position="305"/>
        <end position="325"/>
    </location>
</feature>
<feature type="binding site" evidence="2">
    <location>
        <position position="363"/>
    </location>
    <ligand>
        <name>Zn(2+)</name>
        <dbReference type="ChEBI" id="CHEBI:29105"/>
        <label>1</label>
    </ligand>
</feature>
<feature type="binding site" evidence="2">
    <location>
        <position position="365"/>
    </location>
    <ligand>
        <name>Zn(2+)</name>
        <dbReference type="ChEBI" id="CHEBI:29105"/>
        <label>1</label>
    </ligand>
</feature>
<feature type="binding site" evidence="2">
    <location>
        <position position="376"/>
    </location>
    <ligand>
        <name>Zn(2+)</name>
        <dbReference type="ChEBI" id="CHEBI:29105"/>
        <label>2</label>
    </ligand>
</feature>
<feature type="binding site" evidence="2">
    <location>
        <position position="381"/>
    </location>
    <ligand>
        <name>Zn(2+)</name>
        <dbReference type="ChEBI" id="CHEBI:29105"/>
        <label>2</label>
    </ligand>
</feature>
<feature type="binding site" evidence="2">
    <location>
        <position position="387"/>
    </location>
    <ligand>
        <name>Zn(2+)</name>
        <dbReference type="ChEBI" id="CHEBI:29105"/>
        <label>1</label>
    </ligand>
</feature>
<feature type="binding site" evidence="2">
    <location>
        <position position="390"/>
    </location>
    <ligand>
        <name>Zn(2+)</name>
        <dbReference type="ChEBI" id="CHEBI:29105"/>
        <label>1</label>
    </ligand>
</feature>
<feature type="binding site" evidence="2">
    <location>
        <position position="403"/>
    </location>
    <ligand>
        <name>Zn(2+)</name>
        <dbReference type="ChEBI" id="CHEBI:29105"/>
        <label>2</label>
    </ligand>
</feature>
<feature type="binding site" evidence="2">
    <location>
        <position position="406"/>
    </location>
    <ligand>
        <name>Zn(2+)</name>
        <dbReference type="ChEBI" id="CHEBI:29105"/>
        <label>2</label>
    </ligand>
</feature>
<feature type="site" description="Histone H3K4me3 binding" evidence="2">
    <location>
        <position position="362"/>
    </location>
</feature>
<feature type="site" description="Histone H3K4me3 binding" evidence="2">
    <location>
        <position position="373"/>
    </location>
</feature>
<feature type="site" description="Histone H3K4me3 binding" evidence="2">
    <location>
        <position position="377"/>
    </location>
</feature>
<feature type="site" description="Histone H3K4me3 binding" evidence="2">
    <location>
        <position position="385"/>
    </location>
</feature>
<feature type="modified residue" description="N6-acetyllysine" evidence="1">
    <location>
        <position position="181"/>
    </location>
</feature>
<feature type="modified residue" description="N6-acetyllysine" evidence="17">
    <location>
        <position position="264"/>
    </location>
</feature>
<feature type="cross-link" description="Glycyl lysine isopeptide (Lys-Gly) (interchain with G-Cter in SUMO2)" evidence="20">
    <location>
        <position position="148"/>
    </location>
</feature>
<feature type="cross-link" description="Glycyl lysine isopeptide (Lys-Gly) (interchain with G-Cter in SUMO2)" evidence="20">
    <location>
        <position position="165"/>
    </location>
</feature>
<feature type="cross-link" description="Glycyl lysine isopeptide (Lys-Gly) (interchain with G-Cter in SUMO2)" evidence="18 19 20">
    <location>
        <position position="167"/>
    </location>
</feature>
<feature type="cross-link" description="Glycyl lysine isopeptide (Lys-Gly) (interchain with G-Cter in SUMO2)" evidence="20">
    <location>
        <position position="256"/>
    </location>
</feature>
<feature type="splice variant" id="VSP_012887" description="In isoform 3." evidence="13 14">
    <original>VDRH</original>
    <variation>DLWN</variation>
    <location>
        <begin position="90"/>
        <end position="93"/>
    </location>
</feature>
<feature type="splice variant" id="VSP_012885" description="In isoform 2." evidence="14 15">
    <original>VDR</original>
    <variation>QHF</variation>
    <location>
        <begin position="90"/>
        <end position="92"/>
    </location>
</feature>
<feature type="splice variant" id="VSP_012886" description="In isoform 2." evidence="14 15">
    <location>
        <begin position="93"/>
        <end position="418"/>
    </location>
</feature>
<feature type="splice variant" id="VSP_012888" description="In isoform 3." evidence="13 14">
    <location>
        <begin position="94"/>
        <end position="418"/>
    </location>
</feature>
<feature type="sequence variant" id="VAR_021263" description="In HNSCC." evidence="5">
    <original>D</original>
    <variation>G</variation>
    <location>
        <position position="20"/>
    </location>
</feature>
<feature type="sequence conflict" description="In Ref. 2 and 3." evidence="16" ref="2 3">
    <original>C</original>
    <variation>S</variation>
    <location>
        <position position="325"/>
    </location>
</feature>
<feature type="sequence conflict" description="In Ref. 5; CAC48260." evidence="16" ref="5">
    <original>Q</original>
    <variation>QV</variation>
    <location>
        <position position="367"/>
    </location>
</feature>
<feature type="sequence conflict" description="In Ref. 5; CAC48260." evidence="16" ref="5">
    <location>
        <position position="380"/>
    </location>
</feature>
<feature type="turn" evidence="21">
    <location>
        <begin position="363"/>
        <end position="366"/>
    </location>
</feature>
<feature type="strand" evidence="21">
    <location>
        <begin position="371"/>
        <end position="375"/>
    </location>
</feature>
<feature type="strand" evidence="21">
    <location>
        <begin position="385"/>
        <end position="387"/>
    </location>
</feature>
<feature type="helix" evidence="21">
    <location>
        <begin position="389"/>
        <end position="391"/>
    </location>
</feature>
<feature type="helix" evidence="21">
    <location>
        <begin position="404"/>
        <end position="410"/>
    </location>
</feature>
<gene>
    <name type="primary">ING3</name>
    <name type="ORF">HSPC301</name>
</gene>
<proteinExistence type="evidence at protein level"/>